<proteinExistence type="evidence at protein level"/>
<reference key="1">
    <citation type="journal article" date="2001" name="Genomics">
        <title>Cloning and characterization of human and mouse mitochondrial elongation factor G, GFM and gfm, and mapping of GFM to human chromosome 3q25.1-q26.2.</title>
        <authorList>
            <person name="Gao J."/>
            <person name="Yu L."/>
            <person name="Zhang P."/>
            <person name="Jiang J."/>
            <person name="Chen J."/>
            <person name="Peng J."/>
            <person name="Wei Y."/>
            <person name="Zhao S."/>
        </authorList>
    </citation>
    <scope>NUCLEOTIDE SEQUENCE [MRNA] (ISOFORM 1)</scope>
</reference>
<reference key="2">
    <citation type="journal article" date="2001" name="Hum. Genet.">
        <title>Identification and characterization of two novel human mitochondrial elongation factor genes, hEFG2 and hEFG1, phylogenetically conserved through evolution.</title>
        <authorList>
            <person name="Hammarsund M."/>
            <person name="Wilson W."/>
            <person name="Corcoran M."/>
            <person name="Merup M."/>
            <person name="Einhorn S."/>
            <person name="Grander D."/>
            <person name="Sangfelt O."/>
        </authorList>
    </citation>
    <scope>NUCLEOTIDE SEQUENCE [MRNA] (ISOFORM 1)</scope>
</reference>
<reference key="3">
    <citation type="journal article" date="2004" name="Nat. Genet.">
        <title>Complete sequencing and characterization of 21,243 full-length human cDNAs.</title>
        <authorList>
            <person name="Ota T."/>
            <person name="Suzuki Y."/>
            <person name="Nishikawa T."/>
            <person name="Otsuki T."/>
            <person name="Sugiyama T."/>
            <person name="Irie R."/>
            <person name="Wakamatsu A."/>
            <person name="Hayashi K."/>
            <person name="Sato H."/>
            <person name="Nagai K."/>
            <person name="Kimura K."/>
            <person name="Makita H."/>
            <person name="Sekine M."/>
            <person name="Obayashi M."/>
            <person name="Nishi T."/>
            <person name="Shibahara T."/>
            <person name="Tanaka T."/>
            <person name="Ishii S."/>
            <person name="Yamamoto J."/>
            <person name="Saito K."/>
            <person name="Kawai Y."/>
            <person name="Isono Y."/>
            <person name="Nakamura Y."/>
            <person name="Nagahari K."/>
            <person name="Murakami K."/>
            <person name="Yasuda T."/>
            <person name="Iwayanagi T."/>
            <person name="Wagatsuma M."/>
            <person name="Shiratori A."/>
            <person name="Sudo H."/>
            <person name="Hosoiri T."/>
            <person name="Kaku Y."/>
            <person name="Kodaira H."/>
            <person name="Kondo H."/>
            <person name="Sugawara M."/>
            <person name="Takahashi M."/>
            <person name="Kanda K."/>
            <person name="Yokoi T."/>
            <person name="Furuya T."/>
            <person name="Kikkawa E."/>
            <person name="Omura Y."/>
            <person name="Abe K."/>
            <person name="Kamihara K."/>
            <person name="Katsuta N."/>
            <person name="Sato K."/>
            <person name="Tanikawa M."/>
            <person name="Yamazaki M."/>
            <person name="Ninomiya K."/>
            <person name="Ishibashi T."/>
            <person name="Yamashita H."/>
            <person name="Murakawa K."/>
            <person name="Fujimori K."/>
            <person name="Tanai H."/>
            <person name="Kimata M."/>
            <person name="Watanabe M."/>
            <person name="Hiraoka S."/>
            <person name="Chiba Y."/>
            <person name="Ishida S."/>
            <person name="Ono Y."/>
            <person name="Takiguchi S."/>
            <person name="Watanabe S."/>
            <person name="Yosida M."/>
            <person name="Hotuta T."/>
            <person name="Kusano J."/>
            <person name="Kanehori K."/>
            <person name="Takahashi-Fujii A."/>
            <person name="Hara H."/>
            <person name="Tanase T.-O."/>
            <person name="Nomura Y."/>
            <person name="Togiya S."/>
            <person name="Komai F."/>
            <person name="Hara R."/>
            <person name="Takeuchi K."/>
            <person name="Arita M."/>
            <person name="Imose N."/>
            <person name="Musashino K."/>
            <person name="Yuuki H."/>
            <person name="Oshima A."/>
            <person name="Sasaki N."/>
            <person name="Aotsuka S."/>
            <person name="Yoshikawa Y."/>
            <person name="Matsunawa H."/>
            <person name="Ichihara T."/>
            <person name="Shiohata N."/>
            <person name="Sano S."/>
            <person name="Moriya S."/>
            <person name="Momiyama H."/>
            <person name="Satoh N."/>
            <person name="Takami S."/>
            <person name="Terashima Y."/>
            <person name="Suzuki O."/>
            <person name="Nakagawa S."/>
            <person name="Senoh A."/>
            <person name="Mizoguchi H."/>
            <person name="Goto Y."/>
            <person name="Shimizu F."/>
            <person name="Wakebe H."/>
            <person name="Hishigaki H."/>
            <person name="Watanabe T."/>
            <person name="Sugiyama A."/>
            <person name="Takemoto M."/>
            <person name="Kawakami B."/>
            <person name="Yamazaki M."/>
            <person name="Watanabe K."/>
            <person name="Kumagai A."/>
            <person name="Itakura S."/>
            <person name="Fukuzumi Y."/>
            <person name="Fujimori Y."/>
            <person name="Komiyama M."/>
            <person name="Tashiro H."/>
            <person name="Tanigami A."/>
            <person name="Fujiwara T."/>
            <person name="Ono T."/>
            <person name="Yamada K."/>
            <person name="Fujii Y."/>
            <person name="Ozaki K."/>
            <person name="Hirao M."/>
            <person name="Ohmori Y."/>
            <person name="Kawabata A."/>
            <person name="Hikiji T."/>
            <person name="Kobatake N."/>
            <person name="Inagaki H."/>
            <person name="Ikema Y."/>
            <person name="Okamoto S."/>
            <person name="Okitani R."/>
            <person name="Kawakami T."/>
            <person name="Noguchi S."/>
            <person name="Itoh T."/>
            <person name="Shigeta K."/>
            <person name="Senba T."/>
            <person name="Matsumura K."/>
            <person name="Nakajima Y."/>
            <person name="Mizuno T."/>
            <person name="Morinaga M."/>
            <person name="Sasaki M."/>
            <person name="Togashi T."/>
            <person name="Oyama M."/>
            <person name="Hata H."/>
            <person name="Watanabe M."/>
            <person name="Komatsu T."/>
            <person name="Mizushima-Sugano J."/>
            <person name="Satoh T."/>
            <person name="Shirai Y."/>
            <person name="Takahashi Y."/>
            <person name="Nakagawa K."/>
            <person name="Okumura K."/>
            <person name="Nagase T."/>
            <person name="Nomura N."/>
            <person name="Kikuchi H."/>
            <person name="Masuho Y."/>
            <person name="Yamashita R."/>
            <person name="Nakai K."/>
            <person name="Yada T."/>
            <person name="Nakamura Y."/>
            <person name="Ohara O."/>
            <person name="Isogai T."/>
            <person name="Sugano S."/>
        </authorList>
    </citation>
    <scope>NUCLEOTIDE SEQUENCE [LARGE SCALE MRNA] (ISOFORM 1)</scope>
    <scope>NUCLEOTIDE SEQUENCE [LARGE SCALE MRNA] OF 116-751 (ISOFORM 2)</scope>
    <scope>VARIANT ILE-215</scope>
    <source>
        <tissue>Placenta</tissue>
        <tissue>Tongue</tissue>
    </source>
</reference>
<reference key="4">
    <citation type="journal article" date="2006" name="Nature">
        <title>The DNA sequence, annotation and analysis of human chromosome 3.</title>
        <authorList>
            <person name="Muzny D.M."/>
            <person name="Scherer S.E."/>
            <person name="Kaul R."/>
            <person name="Wang J."/>
            <person name="Yu J."/>
            <person name="Sudbrak R."/>
            <person name="Buhay C.J."/>
            <person name="Chen R."/>
            <person name="Cree A."/>
            <person name="Ding Y."/>
            <person name="Dugan-Rocha S."/>
            <person name="Gill R."/>
            <person name="Gunaratne P."/>
            <person name="Harris R.A."/>
            <person name="Hawes A.C."/>
            <person name="Hernandez J."/>
            <person name="Hodgson A.V."/>
            <person name="Hume J."/>
            <person name="Jackson A."/>
            <person name="Khan Z.M."/>
            <person name="Kovar-Smith C."/>
            <person name="Lewis L.R."/>
            <person name="Lozado R.J."/>
            <person name="Metzker M.L."/>
            <person name="Milosavljevic A."/>
            <person name="Miner G.R."/>
            <person name="Morgan M.B."/>
            <person name="Nazareth L.V."/>
            <person name="Scott G."/>
            <person name="Sodergren E."/>
            <person name="Song X.-Z."/>
            <person name="Steffen D."/>
            <person name="Wei S."/>
            <person name="Wheeler D.A."/>
            <person name="Wright M.W."/>
            <person name="Worley K.C."/>
            <person name="Yuan Y."/>
            <person name="Zhang Z."/>
            <person name="Adams C.Q."/>
            <person name="Ansari-Lari M.A."/>
            <person name="Ayele M."/>
            <person name="Brown M.J."/>
            <person name="Chen G."/>
            <person name="Chen Z."/>
            <person name="Clendenning J."/>
            <person name="Clerc-Blankenburg K.P."/>
            <person name="Chen R."/>
            <person name="Chen Z."/>
            <person name="Davis C."/>
            <person name="Delgado O."/>
            <person name="Dinh H.H."/>
            <person name="Dong W."/>
            <person name="Draper H."/>
            <person name="Ernst S."/>
            <person name="Fu G."/>
            <person name="Gonzalez-Garay M.L."/>
            <person name="Garcia D.K."/>
            <person name="Gillett W."/>
            <person name="Gu J."/>
            <person name="Hao B."/>
            <person name="Haugen E."/>
            <person name="Havlak P."/>
            <person name="He X."/>
            <person name="Hennig S."/>
            <person name="Hu S."/>
            <person name="Huang W."/>
            <person name="Jackson L.R."/>
            <person name="Jacob L.S."/>
            <person name="Kelly S.H."/>
            <person name="Kube M."/>
            <person name="Levy R."/>
            <person name="Li Z."/>
            <person name="Liu B."/>
            <person name="Liu J."/>
            <person name="Liu W."/>
            <person name="Lu J."/>
            <person name="Maheshwari M."/>
            <person name="Nguyen B.-V."/>
            <person name="Okwuonu G.O."/>
            <person name="Palmeiri A."/>
            <person name="Pasternak S."/>
            <person name="Perez L.M."/>
            <person name="Phelps K.A."/>
            <person name="Plopper F.J."/>
            <person name="Qiang B."/>
            <person name="Raymond C."/>
            <person name="Rodriguez R."/>
            <person name="Saenphimmachak C."/>
            <person name="Santibanez J."/>
            <person name="Shen H."/>
            <person name="Shen Y."/>
            <person name="Subramanian S."/>
            <person name="Tabor P.E."/>
            <person name="Verduzco D."/>
            <person name="Waldron L."/>
            <person name="Wang J."/>
            <person name="Wang J."/>
            <person name="Wang Q."/>
            <person name="Williams G.A."/>
            <person name="Wong G.K.-S."/>
            <person name="Yao Z."/>
            <person name="Zhang J."/>
            <person name="Zhang X."/>
            <person name="Zhao G."/>
            <person name="Zhou J."/>
            <person name="Zhou Y."/>
            <person name="Nelson D."/>
            <person name="Lehrach H."/>
            <person name="Reinhardt R."/>
            <person name="Naylor S.L."/>
            <person name="Yang H."/>
            <person name="Olson M."/>
            <person name="Weinstock G."/>
            <person name="Gibbs R.A."/>
        </authorList>
    </citation>
    <scope>NUCLEOTIDE SEQUENCE [LARGE SCALE GENOMIC DNA]</scope>
</reference>
<reference key="5">
    <citation type="submission" date="2005-09" db="EMBL/GenBank/DDBJ databases">
        <authorList>
            <person name="Mural R.J."/>
            <person name="Istrail S."/>
            <person name="Sutton G.G."/>
            <person name="Florea L."/>
            <person name="Halpern A.L."/>
            <person name="Mobarry C.M."/>
            <person name="Lippert R."/>
            <person name="Walenz B."/>
            <person name="Shatkay H."/>
            <person name="Dew I."/>
            <person name="Miller J.R."/>
            <person name="Flanigan M.J."/>
            <person name="Edwards N.J."/>
            <person name="Bolanos R."/>
            <person name="Fasulo D."/>
            <person name="Halldorsson B.V."/>
            <person name="Hannenhalli S."/>
            <person name="Turner R."/>
            <person name="Yooseph S."/>
            <person name="Lu F."/>
            <person name="Nusskern D.R."/>
            <person name="Shue B.C."/>
            <person name="Zheng X.H."/>
            <person name="Zhong F."/>
            <person name="Delcher A.L."/>
            <person name="Huson D.H."/>
            <person name="Kravitz S.A."/>
            <person name="Mouchard L."/>
            <person name="Reinert K."/>
            <person name="Remington K.A."/>
            <person name="Clark A.G."/>
            <person name="Waterman M.S."/>
            <person name="Eichler E.E."/>
            <person name="Adams M.D."/>
            <person name="Hunkapiller M.W."/>
            <person name="Myers E.W."/>
            <person name="Venter J.C."/>
        </authorList>
    </citation>
    <scope>NUCLEOTIDE SEQUENCE [LARGE SCALE GENOMIC DNA]</scope>
</reference>
<reference key="6">
    <citation type="journal article" date="2004" name="Genome Res.">
        <title>The status, quality, and expansion of the NIH full-length cDNA project: the Mammalian Gene Collection (MGC).</title>
        <authorList>
            <consortium name="The MGC Project Team"/>
        </authorList>
    </citation>
    <scope>NUCLEOTIDE SEQUENCE [LARGE SCALE MRNA] (ISOFORM 1)</scope>
    <source>
        <tissue>Duodenum</tissue>
    </source>
</reference>
<reference key="7">
    <citation type="journal article" date="2004" name="Protein Expr. Purif.">
        <title>Expression and characterization of isoform 1 of human mitochondrial elongation factor G.</title>
        <authorList>
            <person name="Bhargava K."/>
            <person name="Templeton P."/>
            <person name="Spremulli L.L."/>
        </authorList>
    </citation>
    <scope>POTENTIAL TRANSIT PEPTIDE</scope>
</reference>
<reference key="8">
    <citation type="journal article" date="2009" name="Mol. Cell">
        <title>EF-G2mt is an exclusive recycling factor in mammalian mitochondrial protein synthesis.</title>
        <authorList>
            <person name="Tsuboi M."/>
            <person name="Morita H."/>
            <person name="Nozaki Y."/>
            <person name="Akama K."/>
            <person name="Ueda T."/>
            <person name="Ito K."/>
            <person name="Nierhaus K.H."/>
            <person name="Takeuchi N."/>
        </authorList>
    </citation>
    <scope>FUNCTION</scope>
    <scope>CATALYTIC ACTIVITY</scope>
    <scope>PATHWAY</scope>
</reference>
<reference key="9">
    <citation type="journal article" date="2009" name="Science">
        <title>Lysine acetylation targets protein complexes and co-regulates major cellular functions.</title>
        <authorList>
            <person name="Choudhary C."/>
            <person name="Kumar C."/>
            <person name="Gnad F."/>
            <person name="Nielsen M.L."/>
            <person name="Rehman M."/>
            <person name="Walther T.C."/>
            <person name="Olsen J.V."/>
            <person name="Mann M."/>
        </authorList>
    </citation>
    <scope>ACETYLATION [LARGE SCALE ANALYSIS] AT LYS-175</scope>
    <scope>IDENTIFICATION BY MASS SPECTROMETRY [LARGE SCALE ANALYSIS]</scope>
</reference>
<reference key="10">
    <citation type="journal article" date="2011" name="BMC Syst. Biol.">
        <title>Initial characterization of the human central proteome.</title>
        <authorList>
            <person name="Burkard T.R."/>
            <person name="Planyavsky M."/>
            <person name="Kaupe I."/>
            <person name="Breitwieser F.P."/>
            <person name="Buerckstuemmer T."/>
            <person name="Bennett K.L."/>
            <person name="Superti-Furga G."/>
            <person name="Colinge J."/>
        </authorList>
    </citation>
    <scope>IDENTIFICATION BY MASS SPECTROMETRY [LARGE SCALE ANALYSIS]</scope>
</reference>
<reference key="11">
    <citation type="journal article" date="2013" name="J. Proteome Res.">
        <title>Toward a comprehensive characterization of a human cancer cell phosphoproteome.</title>
        <authorList>
            <person name="Zhou H."/>
            <person name="Di Palma S."/>
            <person name="Preisinger C."/>
            <person name="Peng M."/>
            <person name="Polat A.N."/>
            <person name="Heck A.J."/>
            <person name="Mohammed S."/>
        </authorList>
    </citation>
    <scope>PHOSPHORYLATION [LARGE SCALE ANALYSIS] AT SER-91</scope>
    <scope>IDENTIFICATION BY MASS SPECTROMETRY [LARGE SCALE ANALYSIS]</scope>
    <source>
        <tissue>Erythroleukemia</tissue>
    </source>
</reference>
<reference key="12">
    <citation type="journal article" date="2014" name="J. Proteomics">
        <title>An enzyme assisted RP-RPLC approach for in-depth analysis of human liver phosphoproteome.</title>
        <authorList>
            <person name="Bian Y."/>
            <person name="Song C."/>
            <person name="Cheng K."/>
            <person name="Dong M."/>
            <person name="Wang F."/>
            <person name="Huang J."/>
            <person name="Sun D."/>
            <person name="Wang L."/>
            <person name="Ye M."/>
            <person name="Zou H."/>
        </authorList>
    </citation>
    <scope>PHOSPHORYLATION [LARGE SCALE ANALYSIS] AT SER-91</scope>
    <scope>IDENTIFICATION BY MASS SPECTROMETRY [LARGE SCALE ANALYSIS]</scope>
    <source>
        <tissue>Liver</tissue>
    </source>
</reference>
<reference key="13">
    <citation type="journal article" date="2015" name="Proteomics">
        <title>N-terminome analysis of the human mitochondrial proteome.</title>
        <authorList>
            <person name="Vaca Jacome A.S."/>
            <person name="Rabilloud T."/>
            <person name="Schaeffer-Reiss C."/>
            <person name="Rompais M."/>
            <person name="Ayoub D."/>
            <person name="Lane L."/>
            <person name="Bairoch A."/>
            <person name="Van Dorsselaer A."/>
            <person name="Carapito C."/>
        </authorList>
    </citation>
    <scope>IDENTIFICATION BY MASS SPECTROMETRY [LARGE SCALE ANALYSIS]</scope>
</reference>
<reference key="14">
    <citation type="journal article" date="2004" name="N. Engl. J. Med.">
        <title>Mutant mitochondrial elongation factor G1 and combined oxidative phosphorylation deficiency.</title>
        <authorList>
            <person name="Coenen M.J.H."/>
            <person name="Antonicka H."/>
            <person name="Ugalde C."/>
            <person name="Sasarman F."/>
            <person name="Rossi R."/>
            <person name="Angelien Heister J.G.A.M."/>
            <person name="Newbold R.F."/>
            <person name="Trijbels F.J.M.F."/>
            <person name="van den Heuvel L.P."/>
            <person name="Shoubridge E.A."/>
            <person name="Smeitink J.A.M."/>
        </authorList>
    </citation>
    <scope>VARIANT COXPD1 SER-174</scope>
</reference>
<reference key="15">
    <citation type="journal article" date="2007" name="Am. J. Hum. Genet.">
        <title>Infantile encephalopathy and defective mitochondrial DNA translation in patients with mutations of mitochondrial elongation factors EFG1 and EFTu.</title>
        <authorList>
            <person name="Valente L."/>
            <person name="Tiranti V."/>
            <person name="Marsano R.M."/>
            <person name="Malfatti E."/>
            <person name="Fernandez-Vizarra E."/>
            <person name="Donnini C."/>
            <person name="Mereghetti P."/>
            <person name="De Gioia L."/>
            <person name="Burlina A."/>
            <person name="Castellan C."/>
            <person name="Comi G.P."/>
            <person name="Savasta S."/>
            <person name="Ferrero I."/>
            <person name="Zeviani M."/>
        </authorList>
    </citation>
    <scope>VARIANT COXPD1 ARG-496</scope>
</reference>
<reference key="16">
    <citation type="journal article" date="2011" name="Eur. J. Hum. Genet.">
        <title>Mutation in subdomain G' of mitochondrial elongation factor G1 is associated with combined OXPHOS deficiency in fibroblasts but not in muscle.</title>
        <authorList>
            <person name="Smits P."/>
            <person name="Antonicka H."/>
            <person name="van Hasselt P.M."/>
            <person name="Weraarpachai W."/>
            <person name="Haller W."/>
            <person name="Schreurs M."/>
            <person name="Venselaar H."/>
            <person name="Rodenburg R.J."/>
            <person name="Smeitink J.A."/>
            <person name="van den Heuvel L.P."/>
        </authorList>
    </citation>
    <scope>VARIANT COXPD1 TRP-250</scope>
</reference>
<reference key="17">
    <citation type="journal article" date="2016" name="PLoS Genet.">
        <title>A comprehensive genomic analysis reveals the genetic landscape of mitochondrial respiratory chain complex deficiencies.</title>
        <authorList>
            <person name="Kohda M."/>
            <person name="Tokuzawa Y."/>
            <person name="Kishita Y."/>
            <person name="Nyuzuki H."/>
            <person name="Moriyama Y."/>
            <person name="Mizuno Y."/>
            <person name="Hirata T."/>
            <person name="Yatsuka Y."/>
            <person name="Yamashita-Sugahara Y."/>
            <person name="Nakachi Y."/>
            <person name="Kato H."/>
            <person name="Okuda A."/>
            <person name="Tamaru S."/>
            <person name="Borna N.N."/>
            <person name="Banshoya K."/>
            <person name="Aigaki T."/>
            <person name="Sato-Miyata Y."/>
            <person name="Ohnuma K."/>
            <person name="Suzuki T."/>
            <person name="Nagao A."/>
            <person name="Maehata H."/>
            <person name="Matsuda F."/>
            <person name="Higasa K."/>
            <person name="Nagasaki M."/>
            <person name="Yasuda J."/>
            <person name="Yamamoto M."/>
            <person name="Fushimi T."/>
            <person name="Shimura M."/>
            <person name="Kaiho-Ichimoto K."/>
            <person name="Harashima H."/>
            <person name="Yamazaki T."/>
            <person name="Mori M."/>
            <person name="Murayama K."/>
            <person name="Ohtake A."/>
            <person name="Okazaki Y."/>
        </authorList>
    </citation>
    <scope>VARIANTS COXPD1 TYR-57 AND TRP-250</scope>
</reference>
<keyword id="KW-0002">3D-structure</keyword>
<keyword id="KW-0007">Acetylation</keyword>
<keyword id="KW-0025">Alternative splicing</keyword>
<keyword id="KW-0251">Elongation factor</keyword>
<keyword id="KW-0342">GTP-binding</keyword>
<keyword id="KW-0378">Hydrolase</keyword>
<keyword id="KW-0496">Mitochondrion</keyword>
<keyword id="KW-0547">Nucleotide-binding</keyword>
<keyword id="KW-0597">Phosphoprotein</keyword>
<keyword id="KW-1274">Primary mitochondrial disease</keyword>
<keyword id="KW-0648">Protein biosynthesis</keyword>
<keyword id="KW-1267">Proteomics identification</keyword>
<keyword id="KW-1185">Reference proteome</keyword>
<keyword id="KW-0809">Transit peptide</keyword>
<evidence type="ECO:0000255" key="1">
    <source>
        <dbReference type="HAMAP-Rule" id="MF_03061"/>
    </source>
</evidence>
<evidence type="ECO:0000269" key="2">
    <source>
    </source>
</evidence>
<evidence type="ECO:0000269" key="3">
    <source>
    </source>
</evidence>
<evidence type="ECO:0000269" key="4">
    <source>
    </source>
</evidence>
<evidence type="ECO:0000269" key="5">
    <source>
    </source>
</evidence>
<evidence type="ECO:0000269" key="6">
    <source>
    </source>
</evidence>
<evidence type="ECO:0000269" key="7">
    <source>
    </source>
</evidence>
<evidence type="ECO:0000303" key="8">
    <source>
    </source>
</evidence>
<evidence type="ECO:0000305" key="9"/>
<evidence type="ECO:0000305" key="10">
    <source>
    </source>
</evidence>
<evidence type="ECO:0007744" key="11">
    <source>
    </source>
</evidence>
<evidence type="ECO:0007744" key="12">
    <source>
    </source>
</evidence>
<evidence type="ECO:0007744" key="13">
    <source>
    </source>
</evidence>
<accession>Q96RP9</accession>
<accession>A6NCI9</accession>
<accession>B2RCB9</accession>
<accession>B3KRW1</accession>
<accession>Q6GTN2</accession>
<accession>Q96T39</accession>
<gene>
    <name evidence="1" type="primary">GFM1</name>
    <name type="synonym">EFG</name>
    <name evidence="1" type="synonym">EFG1</name>
    <name type="synonym">GFM</name>
</gene>
<organism>
    <name type="scientific">Homo sapiens</name>
    <name type="common">Human</name>
    <dbReference type="NCBI Taxonomy" id="9606"/>
    <lineage>
        <taxon>Eukaryota</taxon>
        <taxon>Metazoa</taxon>
        <taxon>Chordata</taxon>
        <taxon>Craniata</taxon>
        <taxon>Vertebrata</taxon>
        <taxon>Euteleostomi</taxon>
        <taxon>Mammalia</taxon>
        <taxon>Eutheria</taxon>
        <taxon>Euarchontoglires</taxon>
        <taxon>Primates</taxon>
        <taxon>Haplorrhini</taxon>
        <taxon>Catarrhini</taxon>
        <taxon>Hominidae</taxon>
        <taxon>Homo</taxon>
    </lineage>
</organism>
<sequence>MRLLGAAAVAALGRGRAPASLGWQRKQVNWKACRWSSSGVIPNEKIRNIGISAHIDSGKTTLTERVLYYTGRIAKMHEVKGKDGVGAVMDSMELERQRGITIQSAATYTMWKDVNINIIDTPGHVDFTIEVERALRVLDGAVLVLCAVGGVQCQTMTVNRQMKRYNVPFLTFINKLDRMGSNPARALQQMRSKLNHNAAFMQIPMGLEGNFKGIVDLIEERAIYFDGDFGQIVRYGEIPAELRAAATDHRQELIECVANSDEQLGEMFLEEKIPSISDLKLAIRRATLKRSFTPVFLGSALKNKGVQPLLDAVLEYLPNPSEVQNYAILNKEDDSKEKTKILMNSSRDNSHPFVGLAFKLEVGRFGQLTYVRSYQGELKKGDTIYNTRTRKKVRLQRLARMHADMMEDVEEVYAGDICALFGIDCASGDTFTDKANSGLSMESIHVPDPVISIAMKPSNKNDLEKFSKGIGRFTREDPTFKVYFDTENKETVISGMGELHLEIYAQRLEREYGCPCITGKPKVAFRETITAPVPFDFTHKKQSGGAGQYGKVIGVLEPLDPEDYTKLEFSDETFGSNIPKQFVPAVEKGFLDACEKGPLSGHKLSGLRFVLQDGAHHMVDSNEISFIRAGEGALKQALANATLCILEPIMAVEVVAPNEFQGQVIAGINRRHGVITGQDGVEDYFTLYADVPLNDMFGYSTELRSCTEGKGEYTMEYSRYQPCLPSTQEDVINKYLEATGQLPVKKGKAKN</sequence>
<name>EFGM_HUMAN</name>
<feature type="transit peptide" description="Mitochondrion" evidence="1">
    <location>
        <begin position="1"/>
        <end position="36"/>
    </location>
</feature>
<feature type="chain" id="PRO_0000007440" description="Elongation factor G, mitochondrial">
    <location>
        <begin position="37"/>
        <end position="751"/>
    </location>
</feature>
<feature type="domain" description="tr-type G">
    <location>
        <begin position="44"/>
        <end position="321"/>
    </location>
</feature>
<feature type="binding site" evidence="1">
    <location>
        <begin position="53"/>
        <end position="60"/>
    </location>
    <ligand>
        <name>GTP</name>
        <dbReference type="ChEBI" id="CHEBI:37565"/>
    </ligand>
</feature>
<feature type="binding site" evidence="1">
    <location>
        <begin position="120"/>
        <end position="124"/>
    </location>
    <ligand>
        <name>GTP</name>
        <dbReference type="ChEBI" id="CHEBI:37565"/>
    </ligand>
</feature>
<feature type="binding site" evidence="1">
    <location>
        <begin position="174"/>
        <end position="177"/>
    </location>
    <ligand>
        <name>GTP</name>
        <dbReference type="ChEBI" id="CHEBI:37565"/>
    </ligand>
</feature>
<feature type="modified residue" description="Phosphoserine" evidence="12 13">
    <location>
        <position position="91"/>
    </location>
</feature>
<feature type="modified residue" description="N6-acetyllysine" evidence="11">
    <location>
        <position position="175"/>
    </location>
</feature>
<feature type="splice variant" id="VSP_038189" description="In isoform 2." evidence="8">
    <original>G</original>
    <variation>GHFLRDFLPLLWNWDRRSGS</variation>
    <location>
        <position position="230"/>
    </location>
</feature>
<feature type="sequence variant" id="VAR_076197" description="In COXPD1; dbSNP:rs1254972325." evidence="7">
    <original>S</original>
    <variation>Y</variation>
    <location>
        <position position="57"/>
    </location>
</feature>
<feature type="sequence variant" id="VAR_021512" description="In COXPD1; dbSNP:rs119470018." evidence="3">
    <original>N</original>
    <variation>S</variation>
    <location>
        <position position="174"/>
    </location>
</feature>
<feature type="sequence variant" id="VAR_028303" description="In dbSNP:rs2303909." evidence="2">
    <original>V</original>
    <variation>I</variation>
    <location>
        <position position="215"/>
    </location>
</feature>
<feature type="sequence variant" id="VAR_076198" description="In COXPD1; dbSNP:rs139430866." evidence="6 7">
    <original>R</original>
    <variation>W</variation>
    <location>
        <position position="250"/>
    </location>
</feature>
<feature type="sequence variant" id="VAR_031901" description="In COXPD1; dbSNP:rs119470020." evidence="4">
    <original>M</original>
    <variation>R</variation>
    <location>
        <position position="496"/>
    </location>
</feature>
<feature type="sequence conflict" description="In Ref. 1; AAK58877." evidence="9" ref="1">
    <original>S</original>
    <variation>C</variation>
    <location>
        <position position="373"/>
    </location>
</feature>
<feature type="sequence conflict" description="In Ref. 1; AAK58877." evidence="9" ref="1">
    <original>I</original>
    <variation>M</variation>
    <location>
        <position position="578"/>
    </location>
</feature>
<dbReference type="EC" id="3.6.5.-" evidence="10"/>
<dbReference type="EMBL" id="AF309777">
    <property type="protein sequence ID" value="AAK58877.1"/>
    <property type="molecule type" value="mRNA"/>
</dbReference>
<dbReference type="EMBL" id="AF367998">
    <property type="protein sequence ID" value="AAK53402.1"/>
    <property type="molecule type" value="mRNA"/>
</dbReference>
<dbReference type="EMBL" id="AK092293">
    <property type="protein sequence ID" value="BAG52523.1"/>
    <property type="molecule type" value="mRNA"/>
</dbReference>
<dbReference type="EMBL" id="AK315031">
    <property type="protein sequence ID" value="BAG37516.1"/>
    <property type="molecule type" value="mRNA"/>
</dbReference>
<dbReference type="EMBL" id="AC080013">
    <property type="status" value="NOT_ANNOTATED_CDS"/>
    <property type="molecule type" value="Genomic_DNA"/>
</dbReference>
<dbReference type="EMBL" id="CH471052">
    <property type="protein sequence ID" value="EAW78677.1"/>
    <property type="molecule type" value="Genomic_DNA"/>
</dbReference>
<dbReference type="EMBL" id="CH471052">
    <property type="protein sequence ID" value="EAW78682.1"/>
    <property type="status" value="ALT_SEQ"/>
    <property type="molecule type" value="Genomic_DNA"/>
</dbReference>
<dbReference type="EMBL" id="BC049210">
    <property type="protein sequence ID" value="AAH49210.1"/>
    <property type="molecule type" value="mRNA"/>
</dbReference>
<dbReference type="CCDS" id="CCDS33885.1">
    <molecule id="Q96RP9-1"/>
</dbReference>
<dbReference type="CCDS" id="CCDS77851.1">
    <molecule id="Q96RP9-2"/>
</dbReference>
<dbReference type="RefSeq" id="NP_001295093.1">
    <molecule id="Q96RP9-2"/>
    <property type="nucleotide sequence ID" value="NM_001308164.2"/>
</dbReference>
<dbReference type="RefSeq" id="NP_001295095.1">
    <property type="nucleotide sequence ID" value="NM_001308166.1"/>
</dbReference>
<dbReference type="RefSeq" id="NP_079272.4">
    <molecule id="Q96RP9-1"/>
    <property type="nucleotide sequence ID" value="NM_024996.5"/>
</dbReference>
<dbReference type="PDB" id="6VLZ">
    <property type="method" value="EM"/>
    <property type="resolution" value="2.97 A"/>
    <property type="chains" value="v=1-751"/>
</dbReference>
<dbReference type="PDB" id="6VMI">
    <property type="method" value="EM"/>
    <property type="resolution" value="2.96 A"/>
    <property type="chains" value="v=1-751"/>
</dbReference>
<dbReference type="PDB" id="6YDP">
    <property type="method" value="EM"/>
    <property type="resolution" value="3.00 A"/>
    <property type="chains" value="BC=37-751"/>
</dbReference>
<dbReference type="PDB" id="6YDW">
    <property type="method" value="EM"/>
    <property type="resolution" value="4.20 A"/>
    <property type="chains" value="BC=37-751"/>
</dbReference>
<dbReference type="PDB" id="7A5K">
    <property type="method" value="EM"/>
    <property type="resolution" value="3.70 A"/>
    <property type="chains" value="r1=1-751"/>
</dbReference>
<dbReference type="PDBsum" id="6VLZ"/>
<dbReference type="PDBsum" id="6VMI"/>
<dbReference type="PDBsum" id="6YDP"/>
<dbReference type="PDBsum" id="6YDW"/>
<dbReference type="PDBsum" id="7A5K"/>
<dbReference type="EMDB" id="EMD-10778"/>
<dbReference type="EMDB" id="EMD-10779"/>
<dbReference type="EMDB" id="EMD-11646"/>
<dbReference type="EMDB" id="EMD-21233"/>
<dbReference type="EMDB" id="EMD-21242"/>
<dbReference type="SMR" id="Q96RP9"/>
<dbReference type="BioGRID" id="124551">
    <property type="interactions" value="341"/>
</dbReference>
<dbReference type="FunCoup" id="Q96RP9">
    <property type="interactions" value="2176"/>
</dbReference>
<dbReference type="IntAct" id="Q96RP9">
    <property type="interactions" value="46"/>
</dbReference>
<dbReference type="MINT" id="Q96RP9"/>
<dbReference type="STRING" id="9606.ENSP00000264263"/>
<dbReference type="GlyGen" id="Q96RP9">
    <property type="glycosylation" value="3 sites, 1 N-linked glycan (1 site), 1 O-linked glycan (1 site)"/>
</dbReference>
<dbReference type="iPTMnet" id="Q96RP9"/>
<dbReference type="MetOSite" id="Q96RP9"/>
<dbReference type="PhosphoSitePlus" id="Q96RP9"/>
<dbReference type="SwissPalm" id="Q96RP9"/>
<dbReference type="BioMuta" id="GFM1"/>
<dbReference type="DMDM" id="116241346"/>
<dbReference type="jPOST" id="Q96RP9"/>
<dbReference type="MassIVE" id="Q96RP9"/>
<dbReference type="PaxDb" id="9606-ENSP00000419038"/>
<dbReference type="PeptideAtlas" id="Q96RP9"/>
<dbReference type="ProteomicsDB" id="78000">
    <molecule id="Q96RP9-1"/>
</dbReference>
<dbReference type="ProteomicsDB" id="78001">
    <molecule id="Q96RP9-2"/>
</dbReference>
<dbReference type="Pumba" id="Q96RP9"/>
<dbReference type="Antibodypedia" id="46773">
    <property type="antibodies" value="189 antibodies from 29 providers"/>
</dbReference>
<dbReference type="DNASU" id="85476"/>
<dbReference type="Ensembl" id="ENST00000264263.9">
    <molecule id="Q96RP9-2"/>
    <property type="protein sequence ID" value="ENSP00000264263.5"/>
    <property type="gene ID" value="ENSG00000168827.15"/>
</dbReference>
<dbReference type="Ensembl" id="ENST00000486715.6">
    <molecule id="Q96RP9-1"/>
    <property type="protein sequence ID" value="ENSP00000419038.1"/>
    <property type="gene ID" value="ENSG00000168827.15"/>
</dbReference>
<dbReference type="GeneID" id="85476"/>
<dbReference type="KEGG" id="hsa:85476"/>
<dbReference type="MANE-Select" id="ENST00000486715.6">
    <property type="protein sequence ID" value="ENSP00000419038.1"/>
    <property type="RefSeq nucleotide sequence ID" value="NM_024996.7"/>
    <property type="RefSeq protein sequence ID" value="NP_079272.4"/>
</dbReference>
<dbReference type="UCSC" id="uc003fce.4">
    <molecule id="Q96RP9-1"/>
    <property type="organism name" value="human"/>
</dbReference>
<dbReference type="AGR" id="HGNC:13780"/>
<dbReference type="CTD" id="85476"/>
<dbReference type="DisGeNET" id="85476"/>
<dbReference type="GeneCards" id="GFM1"/>
<dbReference type="HGNC" id="HGNC:13780">
    <property type="gene designation" value="GFM1"/>
</dbReference>
<dbReference type="HPA" id="ENSG00000168827">
    <property type="expression patterns" value="Low tissue specificity"/>
</dbReference>
<dbReference type="MalaCards" id="GFM1"/>
<dbReference type="MIM" id="606639">
    <property type="type" value="gene"/>
</dbReference>
<dbReference type="MIM" id="609060">
    <property type="type" value="phenotype"/>
</dbReference>
<dbReference type="neXtProt" id="NX_Q96RP9"/>
<dbReference type="OpenTargets" id="ENSG00000168827"/>
<dbReference type="Orphanet" id="137681">
    <property type="disease" value="Hepatoencephalopathy due to combined oxidative phosphorylation defect type 1"/>
</dbReference>
<dbReference type="PharmGKB" id="PA134971637"/>
<dbReference type="VEuPathDB" id="HostDB:ENSG00000168827"/>
<dbReference type="eggNOG" id="KOG0465">
    <property type="taxonomic scope" value="Eukaryota"/>
</dbReference>
<dbReference type="GeneTree" id="ENSGT00550000074911"/>
<dbReference type="HOGENOM" id="CLU_002794_4_0_1"/>
<dbReference type="InParanoid" id="Q96RP9"/>
<dbReference type="OMA" id="GQFAKVQ"/>
<dbReference type="OrthoDB" id="198619at2759"/>
<dbReference type="PAN-GO" id="Q96RP9">
    <property type="GO annotations" value="4 GO annotations based on evolutionary models"/>
</dbReference>
<dbReference type="PhylomeDB" id="Q96RP9"/>
<dbReference type="TreeFam" id="TF105631"/>
<dbReference type="PathwayCommons" id="Q96RP9"/>
<dbReference type="Reactome" id="R-HSA-5389840">
    <property type="pathway name" value="Mitochondrial translation elongation"/>
</dbReference>
<dbReference type="SignaLink" id="Q96RP9"/>
<dbReference type="UniPathway" id="UPA00345"/>
<dbReference type="BioGRID-ORCS" id="85476">
    <property type="hits" value="448 hits in 1172 CRISPR screens"/>
</dbReference>
<dbReference type="CD-CODE" id="91857CE7">
    <property type="entry name" value="Nucleolus"/>
</dbReference>
<dbReference type="ChiTaRS" id="GFM1">
    <property type="organism name" value="human"/>
</dbReference>
<dbReference type="GeneWiki" id="GFM1"/>
<dbReference type="GenomeRNAi" id="85476"/>
<dbReference type="Pharos" id="Q96RP9">
    <property type="development level" value="Tbio"/>
</dbReference>
<dbReference type="PRO" id="PR:Q96RP9"/>
<dbReference type="Proteomes" id="UP000005640">
    <property type="component" value="Chromosome 3"/>
</dbReference>
<dbReference type="RNAct" id="Q96RP9">
    <property type="molecule type" value="protein"/>
</dbReference>
<dbReference type="Bgee" id="ENSG00000168827">
    <property type="expression patterns" value="Expressed in endothelial cell and 182 other cell types or tissues"/>
</dbReference>
<dbReference type="ExpressionAtlas" id="Q96RP9">
    <property type="expression patterns" value="baseline and differential"/>
</dbReference>
<dbReference type="GO" id="GO:0005759">
    <property type="term" value="C:mitochondrial matrix"/>
    <property type="evidence" value="ECO:0000304"/>
    <property type="project" value="Reactome"/>
</dbReference>
<dbReference type="GO" id="GO:0005739">
    <property type="term" value="C:mitochondrion"/>
    <property type="evidence" value="ECO:0006056"/>
    <property type="project" value="FlyBase"/>
</dbReference>
<dbReference type="GO" id="GO:0005525">
    <property type="term" value="F:GTP binding"/>
    <property type="evidence" value="ECO:0007669"/>
    <property type="project" value="UniProtKB-UniRule"/>
</dbReference>
<dbReference type="GO" id="GO:0003924">
    <property type="term" value="F:GTPase activity"/>
    <property type="evidence" value="ECO:0000314"/>
    <property type="project" value="UniProtKB"/>
</dbReference>
<dbReference type="GO" id="GO:0003723">
    <property type="term" value="F:RNA binding"/>
    <property type="evidence" value="ECO:0007005"/>
    <property type="project" value="UniProtKB"/>
</dbReference>
<dbReference type="GO" id="GO:0003746">
    <property type="term" value="F:translation elongation factor activity"/>
    <property type="evidence" value="ECO:0000314"/>
    <property type="project" value="UniProtKB"/>
</dbReference>
<dbReference type="GO" id="GO:0070125">
    <property type="term" value="P:mitochondrial translational elongation"/>
    <property type="evidence" value="ECO:0000314"/>
    <property type="project" value="UniProtKB"/>
</dbReference>
<dbReference type="CDD" id="cd01886">
    <property type="entry name" value="EF-G"/>
    <property type="match status" value="1"/>
</dbReference>
<dbReference type="CDD" id="cd16262">
    <property type="entry name" value="EFG_III"/>
    <property type="match status" value="1"/>
</dbReference>
<dbReference type="CDD" id="cd01434">
    <property type="entry name" value="EFG_mtEFG1_IV"/>
    <property type="match status" value="1"/>
</dbReference>
<dbReference type="CDD" id="cd04097">
    <property type="entry name" value="mtEFG1_C"/>
    <property type="match status" value="1"/>
</dbReference>
<dbReference type="CDD" id="cd04091">
    <property type="entry name" value="mtEFG1_II_like"/>
    <property type="match status" value="1"/>
</dbReference>
<dbReference type="FunFam" id="3.30.230.10:FF:000003">
    <property type="entry name" value="Elongation factor G"/>
    <property type="match status" value="1"/>
</dbReference>
<dbReference type="FunFam" id="3.30.70.240:FF:000001">
    <property type="entry name" value="Elongation factor G"/>
    <property type="match status" value="1"/>
</dbReference>
<dbReference type="FunFam" id="2.40.30.10:FF:000022">
    <property type="entry name" value="Elongation factor G, mitochondrial"/>
    <property type="match status" value="1"/>
</dbReference>
<dbReference type="FunFam" id="3.30.70.870:FF:000008">
    <property type="entry name" value="Elongation factor G, mitochondrial"/>
    <property type="match status" value="1"/>
</dbReference>
<dbReference type="FunFam" id="3.40.50.300:FF:000539">
    <property type="entry name" value="Elongation factor G, mitochondrial"/>
    <property type="match status" value="1"/>
</dbReference>
<dbReference type="Gene3D" id="3.30.230.10">
    <property type="match status" value="1"/>
</dbReference>
<dbReference type="Gene3D" id="3.30.70.240">
    <property type="match status" value="1"/>
</dbReference>
<dbReference type="Gene3D" id="3.30.70.870">
    <property type="entry name" value="Elongation Factor G (Translational Gtpase), domain 3"/>
    <property type="match status" value="1"/>
</dbReference>
<dbReference type="Gene3D" id="3.40.50.300">
    <property type="entry name" value="P-loop containing nucleotide triphosphate hydrolases"/>
    <property type="match status" value="1"/>
</dbReference>
<dbReference type="Gene3D" id="2.40.30.10">
    <property type="entry name" value="Translation factors"/>
    <property type="match status" value="1"/>
</dbReference>
<dbReference type="HAMAP" id="MF_00054_B">
    <property type="entry name" value="EF_G_EF_2_B"/>
    <property type="match status" value="1"/>
</dbReference>
<dbReference type="InterPro" id="IPR041095">
    <property type="entry name" value="EFG_II"/>
</dbReference>
<dbReference type="InterPro" id="IPR009022">
    <property type="entry name" value="EFG_III"/>
</dbReference>
<dbReference type="InterPro" id="IPR035647">
    <property type="entry name" value="EFG_III/V"/>
</dbReference>
<dbReference type="InterPro" id="IPR047872">
    <property type="entry name" value="EFG_IV"/>
</dbReference>
<dbReference type="InterPro" id="IPR035649">
    <property type="entry name" value="EFG_V"/>
</dbReference>
<dbReference type="InterPro" id="IPR000640">
    <property type="entry name" value="EFG_V-like"/>
</dbReference>
<dbReference type="InterPro" id="IPR004161">
    <property type="entry name" value="EFTu-like_2"/>
</dbReference>
<dbReference type="InterPro" id="IPR031157">
    <property type="entry name" value="G_TR_CS"/>
</dbReference>
<dbReference type="InterPro" id="IPR027417">
    <property type="entry name" value="P-loop_NTPase"/>
</dbReference>
<dbReference type="InterPro" id="IPR020568">
    <property type="entry name" value="Ribosomal_Su5_D2-typ_SF"/>
</dbReference>
<dbReference type="InterPro" id="IPR014721">
    <property type="entry name" value="Ribsml_uS5_D2-typ_fold_subgr"/>
</dbReference>
<dbReference type="InterPro" id="IPR005225">
    <property type="entry name" value="Small_GTP-bd"/>
</dbReference>
<dbReference type="InterPro" id="IPR000795">
    <property type="entry name" value="T_Tr_GTP-bd_dom"/>
</dbReference>
<dbReference type="InterPro" id="IPR009000">
    <property type="entry name" value="Transl_B-barrel_sf"/>
</dbReference>
<dbReference type="InterPro" id="IPR004540">
    <property type="entry name" value="Transl_elong_EFG/EF2"/>
</dbReference>
<dbReference type="InterPro" id="IPR005517">
    <property type="entry name" value="Transl_elong_EFG/EF2_IV"/>
</dbReference>
<dbReference type="NCBIfam" id="TIGR00484">
    <property type="entry name" value="EF-G"/>
    <property type="match status" value="1"/>
</dbReference>
<dbReference type="NCBIfam" id="NF009381">
    <property type="entry name" value="PRK12740.1-5"/>
    <property type="match status" value="1"/>
</dbReference>
<dbReference type="NCBIfam" id="TIGR00231">
    <property type="entry name" value="small_GTP"/>
    <property type="match status" value="1"/>
</dbReference>
<dbReference type="PANTHER" id="PTHR43636">
    <property type="entry name" value="ELONGATION FACTOR G, MITOCHONDRIAL"/>
    <property type="match status" value="1"/>
</dbReference>
<dbReference type="PANTHER" id="PTHR43636:SF2">
    <property type="entry name" value="ELONGATION FACTOR G, MITOCHONDRIAL"/>
    <property type="match status" value="1"/>
</dbReference>
<dbReference type="Pfam" id="PF00679">
    <property type="entry name" value="EFG_C"/>
    <property type="match status" value="1"/>
</dbReference>
<dbReference type="Pfam" id="PF14492">
    <property type="entry name" value="EFG_III"/>
    <property type="match status" value="1"/>
</dbReference>
<dbReference type="Pfam" id="PF03764">
    <property type="entry name" value="EFG_IV"/>
    <property type="match status" value="1"/>
</dbReference>
<dbReference type="Pfam" id="PF00009">
    <property type="entry name" value="GTP_EFTU"/>
    <property type="match status" value="1"/>
</dbReference>
<dbReference type="Pfam" id="PF03144">
    <property type="entry name" value="GTP_EFTU_D2"/>
    <property type="match status" value="1"/>
</dbReference>
<dbReference type="PRINTS" id="PR00315">
    <property type="entry name" value="ELONGATNFCT"/>
</dbReference>
<dbReference type="SMART" id="SM00838">
    <property type="entry name" value="EFG_C"/>
    <property type="match status" value="1"/>
</dbReference>
<dbReference type="SMART" id="SM00889">
    <property type="entry name" value="EFG_IV"/>
    <property type="match status" value="1"/>
</dbReference>
<dbReference type="SUPFAM" id="SSF54980">
    <property type="entry name" value="EF-G C-terminal domain-like"/>
    <property type="match status" value="2"/>
</dbReference>
<dbReference type="SUPFAM" id="SSF52540">
    <property type="entry name" value="P-loop containing nucleoside triphosphate hydrolases"/>
    <property type="match status" value="1"/>
</dbReference>
<dbReference type="SUPFAM" id="SSF54211">
    <property type="entry name" value="Ribosomal protein S5 domain 2-like"/>
    <property type="match status" value="1"/>
</dbReference>
<dbReference type="SUPFAM" id="SSF50447">
    <property type="entry name" value="Translation proteins"/>
    <property type="match status" value="1"/>
</dbReference>
<dbReference type="PROSITE" id="PS00301">
    <property type="entry name" value="G_TR_1"/>
    <property type="match status" value="1"/>
</dbReference>
<dbReference type="PROSITE" id="PS51722">
    <property type="entry name" value="G_TR_2"/>
    <property type="match status" value="1"/>
</dbReference>
<protein>
    <recommendedName>
        <fullName evidence="1">Elongation factor G, mitochondrial</fullName>
        <shortName evidence="1">EF-Gmt</shortName>
        <ecNumber evidence="10">3.6.5.-</ecNumber>
    </recommendedName>
    <alternativeName>
        <fullName evidence="1">Elongation factor G 1, mitochondrial</fullName>
        <shortName evidence="1">mEF-G 1</shortName>
    </alternativeName>
    <alternativeName>
        <fullName evidence="1">Elongation factor G1</fullName>
        <shortName>hEFG1</shortName>
    </alternativeName>
</protein>
<comment type="function">
    <text evidence="1 5">Mitochondrial GTPase that catalyzes the GTP-dependent ribosomal translocation step during translation elongation. During this step, the ribosome changes from the pre-translocational (PRE) to the post-translocational (POST) state as the newly formed A-site-bound peptidyl-tRNA and P-site-bound deacylated tRNA move to the P and E sites, respectively. Catalyzes the coordinated movement of the two tRNA molecules, the mRNA and conformational changes in the ribosome. Does not mediate the disassembly of ribosomes from messenger RNA at the termination of mitochondrial protein biosynthesis.</text>
</comment>
<comment type="catalytic activity">
    <reaction evidence="10">
        <text>GTP + H2O = GDP + phosphate + H(+)</text>
        <dbReference type="Rhea" id="RHEA:19669"/>
        <dbReference type="ChEBI" id="CHEBI:15377"/>
        <dbReference type="ChEBI" id="CHEBI:15378"/>
        <dbReference type="ChEBI" id="CHEBI:37565"/>
        <dbReference type="ChEBI" id="CHEBI:43474"/>
        <dbReference type="ChEBI" id="CHEBI:58189"/>
    </reaction>
    <physiologicalReaction direction="left-to-right" evidence="10">
        <dbReference type="Rhea" id="RHEA:19670"/>
    </physiologicalReaction>
</comment>
<comment type="pathway">
    <text evidence="1 5">Protein biosynthesis; polypeptide chain elongation.</text>
</comment>
<comment type="interaction">
    <interactant intactId="EBI-2255048">
        <id>Q96RP9</id>
    </interactant>
    <interactant intactId="EBI-5661333">
        <id>Q969Q1</id>
        <label>TRIM63</label>
    </interactant>
    <organismsDiffer>false</organismsDiffer>
    <experiments>2</experiments>
</comment>
<comment type="interaction">
    <interactant intactId="EBI-2255048">
        <id>Q96RP9</id>
    </interactant>
    <interactant intactId="EBI-2547979">
        <id>P03508</id>
        <label>NS</label>
    </interactant>
    <organismsDiffer>true</organismsDiffer>
    <experiments>2</experiments>
</comment>
<comment type="subcellular location">
    <subcellularLocation>
        <location evidence="1">Mitochondrion</location>
    </subcellularLocation>
</comment>
<comment type="alternative products">
    <event type="alternative splicing"/>
    <isoform>
        <id>Q96RP9-1</id>
        <name>1</name>
        <sequence type="displayed"/>
    </isoform>
    <isoform>
        <id>Q96RP9-2</id>
        <name>2</name>
        <sequence type="described" ref="VSP_038189"/>
    </isoform>
</comment>
<comment type="disease" evidence="3 4 6 7">
    <disease id="DI-01364">
        <name>Combined oxidative phosphorylation deficiency 1</name>
        <acronym>COXPD1</acronym>
        <description>A mitochondrial disease resulting in early rapidly progressive hepatoencephalopathy.</description>
        <dbReference type="MIM" id="609060"/>
    </disease>
    <text>The disease is caused by variants affecting the gene represented in this entry.</text>
</comment>
<comment type="similarity">
    <text evidence="9">Belongs to the TRAFAC class translation factor GTPase superfamily. Classic translation factor GTPase family. EF-G/EF-2 subfamily.</text>
</comment>
<comment type="sequence caution" evidence="9">
    <conflict type="erroneous gene model prediction">
        <sequence resource="EMBL-CDS" id="EAW78682"/>
    </conflict>
</comment>